<reference key="1">
    <citation type="submission" date="2007-10" db="EMBL/GenBank/DDBJ databases">
        <title>Genome sequence of Campylobacter concisus 13826 isolated from human feces.</title>
        <authorList>
            <person name="Fouts D.E."/>
            <person name="Mongodin E.F."/>
            <person name="Puiu D."/>
            <person name="Sebastian Y."/>
            <person name="Miller W.G."/>
            <person name="Mandrell R.E."/>
            <person name="On S."/>
            <person name="Nelson K.E."/>
        </authorList>
    </citation>
    <scope>NUCLEOTIDE SEQUENCE [LARGE SCALE GENOMIC DNA]</scope>
    <source>
        <strain>13826</strain>
    </source>
</reference>
<organism>
    <name type="scientific">Campylobacter concisus (strain 13826)</name>
    <dbReference type="NCBI Taxonomy" id="360104"/>
    <lineage>
        <taxon>Bacteria</taxon>
        <taxon>Pseudomonadati</taxon>
        <taxon>Campylobacterota</taxon>
        <taxon>Epsilonproteobacteria</taxon>
        <taxon>Campylobacterales</taxon>
        <taxon>Campylobacteraceae</taxon>
        <taxon>Campylobacter</taxon>
    </lineage>
</organism>
<feature type="chain" id="PRO_1000073587" description="Proline--tRNA ligase">
    <location>
        <begin position="1"/>
        <end position="566"/>
    </location>
</feature>
<comment type="function">
    <text evidence="1">Catalyzes the attachment of proline to tRNA(Pro) in a two-step reaction: proline is first activated by ATP to form Pro-AMP and then transferred to the acceptor end of tRNA(Pro). As ProRS can inadvertently accommodate and process non-cognate amino acids such as alanine and cysteine, to avoid such errors it has two additional distinct editing activities against alanine. One activity is designated as 'pretransfer' editing and involves the tRNA(Pro)-independent hydrolysis of activated Ala-AMP. The other activity is designated 'posttransfer' editing and involves deacylation of mischarged Ala-tRNA(Pro). The misacylated Cys-tRNA(Pro) is not edited by ProRS.</text>
</comment>
<comment type="catalytic activity">
    <reaction evidence="1">
        <text>tRNA(Pro) + L-proline + ATP = L-prolyl-tRNA(Pro) + AMP + diphosphate</text>
        <dbReference type="Rhea" id="RHEA:14305"/>
        <dbReference type="Rhea" id="RHEA-COMP:9700"/>
        <dbReference type="Rhea" id="RHEA-COMP:9702"/>
        <dbReference type="ChEBI" id="CHEBI:30616"/>
        <dbReference type="ChEBI" id="CHEBI:33019"/>
        <dbReference type="ChEBI" id="CHEBI:60039"/>
        <dbReference type="ChEBI" id="CHEBI:78442"/>
        <dbReference type="ChEBI" id="CHEBI:78532"/>
        <dbReference type="ChEBI" id="CHEBI:456215"/>
        <dbReference type="EC" id="6.1.1.15"/>
    </reaction>
</comment>
<comment type="subunit">
    <text evidence="1">Homodimer.</text>
</comment>
<comment type="subcellular location">
    <subcellularLocation>
        <location evidence="1">Cytoplasm</location>
    </subcellularLocation>
</comment>
<comment type="domain">
    <text evidence="1">Consists of three domains: the N-terminal catalytic domain, the editing domain and the C-terminal anticodon-binding domain.</text>
</comment>
<comment type="similarity">
    <text evidence="1">Belongs to the class-II aminoacyl-tRNA synthetase family. ProS type 1 subfamily.</text>
</comment>
<evidence type="ECO:0000255" key="1">
    <source>
        <dbReference type="HAMAP-Rule" id="MF_01569"/>
    </source>
</evidence>
<dbReference type="EC" id="6.1.1.15" evidence="1"/>
<dbReference type="EMBL" id="CP000792">
    <property type="protein sequence ID" value="EAT97825.1"/>
    <property type="molecule type" value="Genomic_DNA"/>
</dbReference>
<dbReference type="RefSeq" id="WP_012001639.1">
    <property type="nucleotide sequence ID" value="NC_009802.2"/>
</dbReference>
<dbReference type="SMR" id="A7ZD35"/>
<dbReference type="STRING" id="360104.CCC13826_1050"/>
<dbReference type="KEGG" id="cco:CCC13826_1050"/>
<dbReference type="eggNOG" id="COG0442">
    <property type="taxonomic scope" value="Bacteria"/>
</dbReference>
<dbReference type="HOGENOM" id="CLU_016739_0_0_7"/>
<dbReference type="OrthoDB" id="9809052at2"/>
<dbReference type="Proteomes" id="UP000001121">
    <property type="component" value="Chromosome"/>
</dbReference>
<dbReference type="GO" id="GO:0005829">
    <property type="term" value="C:cytosol"/>
    <property type="evidence" value="ECO:0007669"/>
    <property type="project" value="TreeGrafter"/>
</dbReference>
<dbReference type="GO" id="GO:0002161">
    <property type="term" value="F:aminoacyl-tRNA deacylase activity"/>
    <property type="evidence" value="ECO:0007669"/>
    <property type="project" value="InterPro"/>
</dbReference>
<dbReference type="GO" id="GO:0005524">
    <property type="term" value="F:ATP binding"/>
    <property type="evidence" value="ECO:0007669"/>
    <property type="project" value="UniProtKB-UniRule"/>
</dbReference>
<dbReference type="GO" id="GO:0004827">
    <property type="term" value="F:proline-tRNA ligase activity"/>
    <property type="evidence" value="ECO:0007669"/>
    <property type="project" value="UniProtKB-UniRule"/>
</dbReference>
<dbReference type="GO" id="GO:0006433">
    <property type="term" value="P:prolyl-tRNA aminoacylation"/>
    <property type="evidence" value="ECO:0007669"/>
    <property type="project" value="UniProtKB-UniRule"/>
</dbReference>
<dbReference type="CDD" id="cd04334">
    <property type="entry name" value="ProRS-INS"/>
    <property type="match status" value="1"/>
</dbReference>
<dbReference type="CDD" id="cd00861">
    <property type="entry name" value="ProRS_anticodon_short"/>
    <property type="match status" value="1"/>
</dbReference>
<dbReference type="CDD" id="cd00779">
    <property type="entry name" value="ProRS_core_prok"/>
    <property type="match status" value="1"/>
</dbReference>
<dbReference type="FunFam" id="3.30.930.10:FF:000065">
    <property type="entry name" value="Proline--tRNA ligase"/>
    <property type="match status" value="1"/>
</dbReference>
<dbReference type="FunFam" id="3.30.930.10:FF:000066">
    <property type="entry name" value="Proline--tRNA ligase"/>
    <property type="match status" value="1"/>
</dbReference>
<dbReference type="Gene3D" id="3.40.50.800">
    <property type="entry name" value="Anticodon-binding domain"/>
    <property type="match status" value="1"/>
</dbReference>
<dbReference type="Gene3D" id="3.30.930.10">
    <property type="entry name" value="Bira Bifunctional Protein, Domain 2"/>
    <property type="match status" value="1"/>
</dbReference>
<dbReference type="Gene3D" id="3.90.960.10">
    <property type="entry name" value="YbaK/aminoacyl-tRNA synthetase-associated domain"/>
    <property type="match status" value="1"/>
</dbReference>
<dbReference type="HAMAP" id="MF_01569">
    <property type="entry name" value="Pro_tRNA_synth_type1"/>
    <property type="match status" value="1"/>
</dbReference>
<dbReference type="InterPro" id="IPR002314">
    <property type="entry name" value="aa-tRNA-synt_IIb"/>
</dbReference>
<dbReference type="InterPro" id="IPR006195">
    <property type="entry name" value="aa-tRNA-synth_II"/>
</dbReference>
<dbReference type="InterPro" id="IPR045864">
    <property type="entry name" value="aa-tRNA-synth_II/BPL/LPL"/>
</dbReference>
<dbReference type="InterPro" id="IPR004154">
    <property type="entry name" value="Anticodon-bd"/>
</dbReference>
<dbReference type="InterPro" id="IPR036621">
    <property type="entry name" value="Anticodon-bd_dom_sf"/>
</dbReference>
<dbReference type="InterPro" id="IPR002316">
    <property type="entry name" value="Pro-tRNA-ligase_IIa"/>
</dbReference>
<dbReference type="InterPro" id="IPR004500">
    <property type="entry name" value="Pro-tRNA-synth_IIa_bac-type"/>
</dbReference>
<dbReference type="InterPro" id="IPR023717">
    <property type="entry name" value="Pro-tRNA-Synthase_IIa_type1"/>
</dbReference>
<dbReference type="InterPro" id="IPR050062">
    <property type="entry name" value="Pro-tRNA_synthetase"/>
</dbReference>
<dbReference type="InterPro" id="IPR044140">
    <property type="entry name" value="ProRS_anticodon_short"/>
</dbReference>
<dbReference type="InterPro" id="IPR033730">
    <property type="entry name" value="ProRS_core_prok"/>
</dbReference>
<dbReference type="InterPro" id="IPR036754">
    <property type="entry name" value="YbaK/aa-tRNA-synt-asso_dom_sf"/>
</dbReference>
<dbReference type="InterPro" id="IPR007214">
    <property type="entry name" value="YbaK/aa-tRNA-synth-assoc-dom"/>
</dbReference>
<dbReference type="NCBIfam" id="NF006625">
    <property type="entry name" value="PRK09194.1"/>
    <property type="match status" value="1"/>
</dbReference>
<dbReference type="NCBIfam" id="TIGR00409">
    <property type="entry name" value="proS_fam_II"/>
    <property type="match status" value="1"/>
</dbReference>
<dbReference type="PANTHER" id="PTHR42753">
    <property type="entry name" value="MITOCHONDRIAL RIBOSOME PROTEIN L39/PROLYL-TRNA LIGASE FAMILY MEMBER"/>
    <property type="match status" value="1"/>
</dbReference>
<dbReference type="PANTHER" id="PTHR42753:SF2">
    <property type="entry name" value="PROLINE--TRNA LIGASE"/>
    <property type="match status" value="1"/>
</dbReference>
<dbReference type="Pfam" id="PF03129">
    <property type="entry name" value="HGTP_anticodon"/>
    <property type="match status" value="1"/>
</dbReference>
<dbReference type="Pfam" id="PF00587">
    <property type="entry name" value="tRNA-synt_2b"/>
    <property type="match status" value="1"/>
</dbReference>
<dbReference type="Pfam" id="PF04073">
    <property type="entry name" value="tRNA_edit"/>
    <property type="match status" value="1"/>
</dbReference>
<dbReference type="PRINTS" id="PR01046">
    <property type="entry name" value="TRNASYNTHPRO"/>
</dbReference>
<dbReference type="SUPFAM" id="SSF52954">
    <property type="entry name" value="Class II aaRS ABD-related"/>
    <property type="match status" value="1"/>
</dbReference>
<dbReference type="SUPFAM" id="SSF55681">
    <property type="entry name" value="Class II aaRS and biotin synthetases"/>
    <property type="match status" value="1"/>
</dbReference>
<dbReference type="SUPFAM" id="SSF55826">
    <property type="entry name" value="YbaK/ProRS associated domain"/>
    <property type="match status" value="1"/>
</dbReference>
<dbReference type="PROSITE" id="PS50862">
    <property type="entry name" value="AA_TRNA_LIGASE_II"/>
    <property type="match status" value="1"/>
</dbReference>
<proteinExistence type="inferred from homology"/>
<sequence>MKFSKFYAPTTKEAPKDASLPSHQFLIRGGFVEQIGSGLYNYLPLGKIMHDKISRVVKEEMNEAGALEVSFSVVTSGELWKQSGRYNVFGKELLRFKDRKDNDFVISPTNEEAAVALVRGKVTSYKQLPLNLYQINTKFRDEARPRFGLLRGREFTMKDGYSFHSSKEDLKREFDLMEATYSKIFTRLGLNFRAVEADSGAIGGSGSKEFMVLASNGEDDILCCEACRYAANVEAARRKPRVSEAEAPEADAAKFLTPNAKTIKDVAEFFKVSEFYCIKAVMKKAIYEDKEEVVVFFVRGDDELQETKAQNACKALELVDASEADVAKAGLVAGFCGPVGLKDVKFFIDNELRGANNMICGANEKDYHFVGVSVSGFNEERFKDLVKVKEGDKCPVCGGNLKLSKGIEVGHIFQLGDKYSAAMNATYLDENGKVKPFLMGCYGIGISRLIAVMIEASHDEKGCIWKKECAPFDVEIIISNLKDEAGVKFAFELYESLKKAGVSVIIDDRNERFGVKMNDFELIGFPYALLVGKEFANGKVEFITRDGLSKETIEANDAFRKIKESL</sequence>
<gene>
    <name evidence="1" type="primary">proS</name>
    <name type="ordered locus">Ccon26_08210</name>
    <name type="ORF">CCC13826_1050</name>
</gene>
<accession>A7ZD35</accession>
<protein>
    <recommendedName>
        <fullName evidence="1">Proline--tRNA ligase</fullName>
        <ecNumber evidence="1">6.1.1.15</ecNumber>
    </recommendedName>
    <alternativeName>
        <fullName evidence="1">Prolyl-tRNA synthetase</fullName>
        <shortName evidence="1">ProRS</shortName>
    </alternativeName>
</protein>
<name>SYP_CAMC1</name>
<keyword id="KW-0030">Aminoacyl-tRNA synthetase</keyword>
<keyword id="KW-0067">ATP-binding</keyword>
<keyword id="KW-0963">Cytoplasm</keyword>
<keyword id="KW-0436">Ligase</keyword>
<keyword id="KW-0547">Nucleotide-binding</keyword>
<keyword id="KW-0648">Protein biosynthesis</keyword>